<accession>P87122</accession>
<proteinExistence type="inferred from homology"/>
<feature type="chain" id="PRO_0000317130" description="Putative cation exchanger C3A12.06c">
    <location>
        <begin position="1"/>
        <end position="743"/>
    </location>
</feature>
<feature type="transmembrane region" description="Helical" evidence="2">
    <location>
        <begin position="13"/>
        <end position="33"/>
    </location>
</feature>
<feature type="transmembrane region" description="Helical" evidence="2">
    <location>
        <begin position="109"/>
        <end position="129"/>
    </location>
</feature>
<feature type="transmembrane region" description="Helical" evidence="2">
    <location>
        <begin position="138"/>
        <end position="158"/>
    </location>
</feature>
<feature type="transmembrane region" description="Helical" evidence="2">
    <location>
        <begin position="182"/>
        <end position="202"/>
    </location>
</feature>
<feature type="transmembrane region" description="Helical" evidence="2">
    <location>
        <begin position="213"/>
        <end position="233"/>
    </location>
</feature>
<feature type="transmembrane region" description="Helical" evidence="2">
    <location>
        <begin position="239"/>
        <end position="258"/>
    </location>
</feature>
<feature type="transmembrane region" description="Helical" evidence="2">
    <location>
        <begin position="528"/>
        <end position="548"/>
    </location>
</feature>
<feature type="transmembrane region" description="Helical" evidence="2">
    <location>
        <begin position="551"/>
        <end position="571"/>
    </location>
</feature>
<feature type="transmembrane region" description="Helical" evidence="2">
    <location>
        <begin position="580"/>
        <end position="600"/>
    </location>
</feature>
<feature type="transmembrane region" description="Helical" evidence="2">
    <location>
        <begin position="609"/>
        <end position="629"/>
    </location>
</feature>
<feature type="transmembrane region" description="Helical" evidence="2">
    <location>
        <begin position="649"/>
        <end position="669"/>
    </location>
</feature>
<feature type="transmembrane region" description="Helical" evidence="2">
    <location>
        <begin position="690"/>
        <end position="710"/>
    </location>
</feature>
<feature type="transmembrane region" description="Helical" evidence="2">
    <location>
        <begin position="718"/>
        <end position="738"/>
    </location>
</feature>
<comment type="function">
    <text evidence="1">Putative cation exchanger.</text>
</comment>
<comment type="subcellular location">
    <subcellularLocation>
        <location evidence="3">Endoplasmic reticulum membrane</location>
        <topology evidence="3">Multi-pass membrane protein</topology>
    </subcellularLocation>
</comment>
<comment type="similarity">
    <text evidence="4">Belongs to the Ca(2+):cation antiporter (CaCA) (TC 2.A.19) family.</text>
</comment>
<protein>
    <recommendedName>
        <fullName>Putative cation exchanger C3A12.06c</fullName>
    </recommendedName>
</protein>
<gene>
    <name type="ORF">SPAC3A12.06c</name>
</gene>
<evidence type="ECO:0000250" key="1"/>
<evidence type="ECO:0000255" key="2"/>
<evidence type="ECO:0000269" key="3">
    <source>
    </source>
</evidence>
<evidence type="ECO:0000305" key="4"/>
<organism>
    <name type="scientific">Schizosaccharomyces pombe (strain 972 / ATCC 24843)</name>
    <name type="common">Fission yeast</name>
    <dbReference type="NCBI Taxonomy" id="284812"/>
    <lineage>
        <taxon>Eukaryota</taxon>
        <taxon>Fungi</taxon>
        <taxon>Dikarya</taxon>
        <taxon>Ascomycota</taxon>
        <taxon>Taphrinomycotina</taxon>
        <taxon>Schizosaccharomycetes</taxon>
        <taxon>Schizosaccharomycetales</taxon>
        <taxon>Schizosaccharomycetaceae</taxon>
        <taxon>Schizosaccharomyces</taxon>
    </lineage>
</organism>
<reference key="1">
    <citation type="journal article" date="2002" name="Nature">
        <title>The genome sequence of Schizosaccharomyces pombe.</title>
        <authorList>
            <person name="Wood V."/>
            <person name="Gwilliam R."/>
            <person name="Rajandream M.A."/>
            <person name="Lyne M.H."/>
            <person name="Lyne R."/>
            <person name="Stewart A."/>
            <person name="Sgouros J.G."/>
            <person name="Peat N."/>
            <person name="Hayles J."/>
            <person name="Baker S.G."/>
            <person name="Basham D."/>
            <person name="Bowman S."/>
            <person name="Brooks K."/>
            <person name="Brown D."/>
            <person name="Brown S."/>
            <person name="Chillingworth T."/>
            <person name="Churcher C.M."/>
            <person name="Collins M."/>
            <person name="Connor R."/>
            <person name="Cronin A."/>
            <person name="Davis P."/>
            <person name="Feltwell T."/>
            <person name="Fraser A."/>
            <person name="Gentles S."/>
            <person name="Goble A."/>
            <person name="Hamlin N."/>
            <person name="Harris D.E."/>
            <person name="Hidalgo J."/>
            <person name="Hodgson G."/>
            <person name="Holroyd S."/>
            <person name="Hornsby T."/>
            <person name="Howarth S."/>
            <person name="Huckle E.J."/>
            <person name="Hunt S."/>
            <person name="Jagels K."/>
            <person name="James K.D."/>
            <person name="Jones L."/>
            <person name="Jones M."/>
            <person name="Leather S."/>
            <person name="McDonald S."/>
            <person name="McLean J."/>
            <person name="Mooney P."/>
            <person name="Moule S."/>
            <person name="Mungall K.L."/>
            <person name="Murphy L.D."/>
            <person name="Niblett D."/>
            <person name="Odell C."/>
            <person name="Oliver K."/>
            <person name="O'Neil S."/>
            <person name="Pearson D."/>
            <person name="Quail M.A."/>
            <person name="Rabbinowitsch E."/>
            <person name="Rutherford K.M."/>
            <person name="Rutter S."/>
            <person name="Saunders D."/>
            <person name="Seeger K."/>
            <person name="Sharp S."/>
            <person name="Skelton J."/>
            <person name="Simmonds M.N."/>
            <person name="Squares R."/>
            <person name="Squares S."/>
            <person name="Stevens K."/>
            <person name="Taylor K."/>
            <person name="Taylor R.G."/>
            <person name="Tivey A."/>
            <person name="Walsh S.V."/>
            <person name="Warren T."/>
            <person name="Whitehead S."/>
            <person name="Woodward J.R."/>
            <person name="Volckaert G."/>
            <person name="Aert R."/>
            <person name="Robben J."/>
            <person name="Grymonprez B."/>
            <person name="Weltjens I."/>
            <person name="Vanstreels E."/>
            <person name="Rieger M."/>
            <person name="Schaefer M."/>
            <person name="Mueller-Auer S."/>
            <person name="Gabel C."/>
            <person name="Fuchs M."/>
            <person name="Duesterhoeft A."/>
            <person name="Fritzc C."/>
            <person name="Holzer E."/>
            <person name="Moestl D."/>
            <person name="Hilbert H."/>
            <person name="Borzym K."/>
            <person name="Langer I."/>
            <person name="Beck A."/>
            <person name="Lehrach H."/>
            <person name="Reinhardt R."/>
            <person name="Pohl T.M."/>
            <person name="Eger P."/>
            <person name="Zimmermann W."/>
            <person name="Wedler H."/>
            <person name="Wambutt R."/>
            <person name="Purnelle B."/>
            <person name="Goffeau A."/>
            <person name="Cadieu E."/>
            <person name="Dreano S."/>
            <person name="Gloux S."/>
            <person name="Lelaure V."/>
            <person name="Mottier S."/>
            <person name="Galibert F."/>
            <person name="Aves S.J."/>
            <person name="Xiang Z."/>
            <person name="Hunt C."/>
            <person name="Moore K."/>
            <person name="Hurst S.M."/>
            <person name="Lucas M."/>
            <person name="Rochet M."/>
            <person name="Gaillardin C."/>
            <person name="Tallada V.A."/>
            <person name="Garzon A."/>
            <person name="Thode G."/>
            <person name="Daga R.R."/>
            <person name="Cruzado L."/>
            <person name="Jimenez J."/>
            <person name="Sanchez M."/>
            <person name="del Rey F."/>
            <person name="Benito J."/>
            <person name="Dominguez A."/>
            <person name="Revuelta J.L."/>
            <person name="Moreno S."/>
            <person name="Armstrong J."/>
            <person name="Forsburg S.L."/>
            <person name="Cerutti L."/>
            <person name="Lowe T."/>
            <person name="McCombie W.R."/>
            <person name="Paulsen I."/>
            <person name="Potashkin J."/>
            <person name="Shpakovski G.V."/>
            <person name="Ussery D."/>
            <person name="Barrell B.G."/>
            <person name="Nurse P."/>
        </authorList>
    </citation>
    <scope>NUCLEOTIDE SEQUENCE [LARGE SCALE GENOMIC DNA]</scope>
    <source>
        <strain>972 / ATCC 24843</strain>
    </source>
</reference>
<reference key="2">
    <citation type="journal article" date="2006" name="Nat. Biotechnol.">
        <title>ORFeome cloning and global analysis of protein localization in the fission yeast Schizosaccharomyces pombe.</title>
        <authorList>
            <person name="Matsuyama A."/>
            <person name="Arai R."/>
            <person name="Yashiroda Y."/>
            <person name="Shirai A."/>
            <person name="Kamata A."/>
            <person name="Sekido S."/>
            <person name="Kobayashi Y."/>
            <person name="Hashimoto A."/>
            <person name="Hamamoto M."/>
            <person name="Hiraoka Y."/>
            <person name="Horinouchi S."/>
            <person name="Yoshida M."/>
        </authorList>
    </citation>
    <scope>SUBCELLULAR LOCATION [LARGE SCALE ANALYSIS]</scope>
</reference>
<keyword id="KW-0256">Endoplasmic reticulum</keyword>
<keyword id="KW-0406">Ion transport</keyword>
<keyword id="KW-0472">Membrane</keyword>
<keyword id="KW-1185">Reference proteome</keyword>
<keyword id="KW-0812">Transmembrane</keyword>
<keyword id="KW-1133">Transmembrane helix</keyword>
<keyword id="KW-0813">Transport</keyword>
<sequence length="743" mass="82397">MSKTSCFLKKYRLILLWCILGIAYILFWTHRISKAFASVSSTSDSTVHLFERGNTLNDSNDQILLTCNDIKNITPANQCRFAKAYCKGEASGFFDYVEFYFCTINSLRFPVLSIIVGWLIFLFITIGISASDFFSTNLVTISWLLQLPDSVVGVTFLALGNGSPDILSTFAAVRVNSGGMAIGELLGSAFFIVAIVAGSVCLIKPFKIPRRHFLRDVAFLTGTILLVIMFVLHDGSLSIWQSLVMILYYLLYVLFVFFSGSSGVSVVITDENYLPVSLPVYSPVLNSFDDSDSYSSTDSELSEEAFLLPAQASRKTQKIHYINDNDPSNSYSSYQHSHVHDFIHKNNTHSNRVLSQSSGPIVRPSLLAALDFRSSNEEQHPGLRSLDPLNIQDGDLTMHPMHIRHSQSDFYPSGINTPVSGINYPNLGFSANNSVQSLVSEIFRHPTHTDEDFPLPSPSLSSLLFPTLRNFAKKSWYEKLMDVLAVPSVLIFTLALPVYQCPRLAVDPIYHMDVSNCNPSKPTWSRKLRLLQCVFVPFAFVTFSITGGNRLYIYAASSVFSILCITALYYYTDEEKPPKFLPWVSFIGFVLGIIWISTIANEVVGILRALGVIFNLNESILGLTVFAAGNSLSDLIADIMIARSGFPEMAMGGVFGGPTLNILIGIGISSFYSSISNHGNDSVIEIPHSLSITAYFLLACLLLLLIYVPLNRFRVNRVLGLLLFILYIVGTSTNIVVELLKDK</sequence>
<name>YDL6_SCHPO</name>
<dbReference type="EMBL" id="CU329670">
    <property type="protein sequence ID" value="CAB08751.1"/>
    <property type="molecule type" value="Genomic_DNA"/>
</dbReference>
<dbReference type="PIR" id="T38674">
    <property type="entry name" value="T38674"/>
</dbReference>
<dbReference type="RefSeq" id="NP_593332.1">
    <property type="nucleotide sequence ID" value="NM_001018763.2"/>
</dbReference>
<dbReference type="BioGRID" id="279612">
    <property type="interactions" value="17"/>
</dbReference>
<dbReference type="FunCoup" id="P87122">
    <property type="interactions" value="47"/>
</dbReference>
<dbReference type="STRING" id="284812.P87122"/>
<dbReference type="iPTMnet" id="P87122"/>
<dbReference type="PaxDb" id="4896-SPAC3A12.06c.1"/>
<dbReference type="EnsemblFungi" id="SPAC3A12.06c.1">
    <property type="protein sequence ID" value="SPAC3A12.06c.1:pep"/>
    <property type="gene ID" value="SPAC3A12.06c"/>
</dbReference>
<dbReference type="KEGG" id="spo:2543183"/>
<dbReference type="PomBase" id="SPAC3A12.06c"/>
<dbReference type="VEuPathDB" id="FungiDB:SPAC3A12.06c"/>
<dbReference type="eggNOG" id="KOG2399">
    <property type="taxonomic scope" value="Eukaryota"/>
</dbReference>
<dbReference type="HOGENOM" id="CLU_004979_2_1_1"/>
<dbReference type="InParanoid" id="P87122"/>
<dbReference type="OMA" id="VKQPIDM"/>
<dbReference type="PhylomeDB" id="P87122"/>
<dbReference type="Reactome" id="R-SPO-425561">
    <property type="pathway name" value="Sodium/Calcium exchangers"/>
</dbReference>
<dbReference type="Reactome" id="R-SPO-8949215">
    <property type="pathway name" value="Mitochondrial calcium ion transport"/>
</dbReference>
<dbReference type="PRO" id="PR:P87122"/>
<dbReference type="Proteomes" id="UP000002485">
    <property type="component" value="Chromosome I"/>
</dbReference>
<dbReference type="GO" id="GO:0005783">
    <property type="term" value="C:endoplasmic reticulum"/>
    <property type="evidence" value="ECO:0007005"/>
    <property type="project" value="PomBase"/>
</dbReference>
<dbReference type="GO" id="GO:0005789">
    <property type="term" value="C:endoplasmic reticulum membrane"/>
    <property type="evidence" value="ECO:0007669"/>
    <property type="project" value="UniProtKB-SubCell"/>
</dbReference>
<dbReference type="GO" id="GO:0016020">
    <property type="term" value="C:membrane"/>
    <property type="evidence" value="ECO:0000318"/>
    <property type="project" value="GO_Central"/>
</dbReference>
<dbReference type="GO" id="GO:0008324">
    <property type="term" value="F:monoatomic cation transmembrane transporter activity"/>
    <property type="evidence" value="ECO:0000318"/>
    <property type="project" value="GO_Central"/>
</dbReference>
<dbReference type="GO" id="GO:0006874">
    <property type="term" value="P:intracellular calcium ion homeostasis"/>
    <property type="evidence" value="ECO:0000318"/>
    <property type="project" value="GO_Central"/>
</dbReference>
<dbReference type="GO" id="GO:0098655">
    <property type="term" value="P:monoatomic cation transmembrane transport"/>
    <property type="evidence" value="ECO:0000255"/>
    <property type="project" value="PomBase"/>
</dbReference>
<dbReference type="GO" id="GO:0006812">
    <property type="term" value="P:monoatomic cation transport"/>
    <property type="evidence" value="ECO:0000318"/>
    <property type="project" value="GO_Central"/>
</dbReference>
<dbReference type="Gene3D" id="1.20.1420.30">
    <property type="entry name" value="NCX, central ion-binding region"/>
    <property type="match status" value="2"/>
</dbReference>
<dbReference type="InterPro" id="IPR051359">
    <property type="entry name" value="CaCA_antiporter"/>
</dbReference>
<dbReference type="InterPro" id="IPR004837">
    <property type="entry name" value="NaCa_Exmemb"/>
</dbReference>
<dbReference type="InterPro" id="IPR044880">
    <property type="entry name" value="NCX_ion-bd_dom_sf"/>
</dbReference>
<dbReference type="PANTHER" id="PTHR12266:SF0">
    <property type="entry name" value="MITOCHONDRIAL SODIUM_CALCIUM EXCHANGER PROTEIN"/>
    <property type="match status" value="1"/>
</dbReference>
<dbReference type="PANTHER" id="PTHR12266">
    <property type="entry name" value="NA+/CA2+ K+ INDEPENDENT EXCHANGER"/>
    <property type="match status" value="1"/>
</dbReference>
<dbReference type="Pfam" id="PF01699">
    <property type="entry name" value="Na_Ca_ex"/>
    <property type="match status" value="2"/>
</dbReference>